<organism>
    <name type="scientific">Triticum aestivum</name>
    <name type="common">Wheat</name>
    <dbReference type="NCBI Taxonomy" id="4565"/>
    <lineage>
        <taxon>Eukaryota</taxon>
        <taxon>Viridiplantae</taxon>
        <taxon>Streptophyta</taxon>
        <taxon>Embryophyta</taxon>
        <taxon>Tracheophyta</taxon>
        <taxon>Spermatophyta</taxon>
        <taxon>Magnoliopsida</taxon>
        <taxon>Liliopsida</taxon>
        <taxon>Poales</taxon>
        <taxon>Poaceae</taxon>
        <taxon>BOP clade</taxon>
        <taxon>Pooideae</taxon>
        <taxon>Triticodae</taxon>
        <taxon>Triticeae</taxon>
        <taxon>Triticinae</taxon>
        <taxon>Triticum</taxon>
    </lineage>
</organism>
<gene>
    <name evidence="5" type="primary">BZIP1-D</name>
    <name evidence="4" type="synonym">BZIP1</name>
</gene>
<evidence type="ECO:0000255" key="1">
    <source>
        <dbReference type="PROSITE-ProRule" id="PRU00978"/>
    </source>
</evidence>
<evidence type="ECO:0000256" key="2">
    <source>
        <dbReference type="SAM" id="MobiDB-lite"/>
    </source>
</evidence>
<evidence type="ECO:0000269" key="3">
    <source ref="2"/>
</evidence>
<evidence type="ECO:0000303" key="4">
    <source ref="2"/>
</evidence>
<evidence type="ECO:0000305" key="5"/>
<proteinExistence type="evidence at transcript level"/>
<protein>
    <recommendedName>
        <fullName evidence="5">bZIP transcription factor 1-D</fullName>
        <shortName evidence="5">TabZIP1-D</shortName>
    </recommendedName>
</protein>
<name>BZP1D_WHEAT</name>
<sequence>MGSSEAETPAKANKASAPQEQQPPATSSTATPTVYPDWTSFQGYPPIPPHGFFPSPVVSNPQGHPYMWGPQPMMPPYGSPPYVIYPPGGIYAHPSMRPGAHPFAPYTMTSPNGNPDAAGTTTTAATAGGETNGKSSEGKEKSPIKRSKGSLGSLNMITGKNCVEHGKTSGASANGTISQSGESGSESSSEGSEANSQNDSQHKESGQEQDGDVRSSQNGVSPSPSQAQLKQTLAIMQMPSSGPVPGPTTNLNIGMDYWANTASSSPALHGKVTPTAIPGAVAPTEPWMQDERELKRQKRKQSNRDSARRSRLRKQAECEELAQRAEVLKQENASLKDEVSRIRKEYDELLSKNSSLKDNVGDKQHKTDEAGLDNKLQHSGDDSQKDTN</sequence>
<dbReference type="SMR" id="A0A3B6MPP5"/>
<dbReference type="STRING" id="4565.A0A3B6MPP5"/>
<dbReference type="EnsemblPlants" id="TraesARI5D03G03037110.1">
    <property type="protein sequence ID" value="TraesARI5D03G03037110.1"/>
    <property type="gene ID" value="TraesARI5D03G03037110"/>
</dbReference>
<dbReference type="EnsemblPlants" id="TraesCAD_scaffold_090530_01G000100.1">
    <property type="protein sequence ID" value="TraesCAD_scaffold_090530_01G000100.1"/>
    <property type="gene ID" value="TraesCAD_scaffold_090530_01G000100"/>
</dbReference>
<dbReference type="EnsemblPlants" id="TraesCLE_scaffold_035800_01G000100.1">
    <property type="protein sequence ID" value="TraesCLE_scaffold_035800_01G000100.1"/>
    <property type="gene ID" value="TraesCLE_scaffold_035800_01G000100"/>
</dbReference>
<dbReference type="EnsemblPlants" id="TraesCS5D02G124600.1">
    <property type="protein sequence ID" value="TraesCS5D02G124600.1"/>
    <property type="gene ID" value="TraesCS5D02G124600"/>
</dbReference>
<dbReference type="EnsemblPlants" id="TraesCS5D03G0314600.1">
    <property type="protein sequence ID" value="TraesCS5D03G0314600.1.CDS"/>
    <property type="gene ID" value="TraesCS5D03G0314600"/>
</dbReference>
<dbReference type="EnsemblPlants" id="TraesJAG5D03G03081720.1">
    <property type="protein sequence ID" value="TraesJAG5D03G03081720.1"/>
    <property type="gene ID" value="TraesJAG5D03G03081720"/>
</dbReference>
<dbReference type="EnsemblPlants" id="TraesKAR5D01G0136900.1">
    <property type="protein sequence ID" value="cds.TraesKAR5D01G0136900.1"/>
    <property type="gene ID" value="TraesKAR5D01G0136900"/>
</dbReference>
<dbReference type="EnsemblPlants" id="TraesKAR5D01G0136900.2">
    <property type="protein sequence ID" value="cds.TraesKAR5D01G0136900.2"/>
    <property type="gene ID" value="TraesKAR5D01G0136900"/>
</dbReference>
<dbReference type="EnsemblPlants" id="TraesLAC5D03G03039480.1">
    <property type="protein sequence ID" value="TraesLAC5D03G03039480.1"/>
    <property type="gene ID" value="TraesLAC5D03G03039480"/>
</dbReference>
<dbReference type="EnsemblPlants" id="TraesLDM5D03G03088290.1">
    <property type="protein sequence ID" value="TraesLDM5D03G03088290.1"/>
    <property type="gene ID" value="TraesLDM5D03G03088290"/>
</dbReference>
<dbReference type="EnsemblPlants" id="TraesMAC5D03G03082700.1">
    <property type="protein sequence ID" value="TraesMAC5D03G03082700.1"/>
    <property type="gene ID" value="TraesMAC5D03G03082700"/>
</dbReference>
<dbReference type="EnsemblPlants" id="TraesNOR5D03G03113330.1">
    <property type="protein sequence ID" value="TraesNOR5D03G03113330.1"/>
    <property type="gene ID" value="TraesNOR5D03G03113330"/>
</dbReference>
<dbReference type="EnsemblPlants" id="TraesNORUn03G04699840.1">
    <property type="protein sequence ID" value="TraesNORUn03G04699840.1"/>
    <property type="gene ID" value="TraesNORUn03G04699840"/>
</dbReference>
<dbReference type="EnsemblPlants" id="TraesPARA_EIv1.0_1793830.1">
    <property type="protein sequence ID" value="TraesPARA_EIv1.0_1793830.1.CDS"/>
    <property type="gene ID" value="TraesPARA_EIv1.0_1793830"/>
</dbReference>
<dbReference type="EnsemblPlants" id="TraesROB_scaffold_041293_01G000100.1">
    <property type="protein sequence ID" value="TraesROB_scaffold_041293_01G000100.1"/>
    <property type="gene ID" value="TraesROB_scaffold_041293_01G000100"/>
</dbReference>
<dbReference type="EnsemblPlants" id="TraesSTA5D03G03074560.1">
    <property type="protein sequence ID" value="TraesSTA5D03G03074560.1"/>
    <property type="gene ID" value="TraesSTA5D03G03074560"/>
</dbReference>
<dbReference type="EnsemblPlants" id="TraesSYM5D03G03023320.1">
    <property type="protein sequence ID" value="TraesSYM5D03G03023320.1"/>
    <property type="gene ID" value="TraesSYM5D03G03023320"/>
</dbReference>
<dbReference type="EnsemblPlants" id="TraesWEE_scaffold_058727_01G000100.1">
    <property type="protein sequence ID" value="TraesWEE_scaffold_058727_01G000100.1"/>
    <property type="gene ID" value="TraesWEE_scaffold_058727_01G000100"/>
</dbReference>
<dbReference type="Gramene" id="TraesARI5D03G03037110.1">
    <property type="protein sequence ID" value="TraesARI5D03G03037110.1"/>
    <property type="gene ID" value="TraesARI5D03G03037110"/>
</dbReference>
<dbReference type="Gramene" id="TraesCAD_scaffold_090530_01G000100.1">
    <property type="protein sequence ID" value="TraesCAD_scaffold_090530_01G000100.1"/>
    <property type="gene ID" value="TraesCAD_scaffold_090530_01G000100"/>
</dbReference>
<dbReference type="Gramene" id="TraesCLE_scaffold_035800_01G000100.1">
    <property type="protein sequence ID" value="TraesCLE_scaffold_035800_01G000100.1"/>
    <property type="gene ID" value="TraesCLE_scaffold_035800_01G000100"/>
</dbReference>
<dbReference type="Gramene" id="TraesCS5D02G124600.1">
    <property type="protein sequence ID" value="TraesCS5D02G124600.1"/>
    <property type="gene ID" value="TraesCS5D02G124600"/>
</dbReference>
<dbReference type="Gramene" id="TraesCS5D03G0314600.1">
    <property type="protein sequence ID" value="TraesCS5D03G0314600.1.CDS"/>
    <property type="gene ID" value="TraesCS5D03G0314600"/>
</dbReference>
<dbReference type="Gramene" id="TraesJAG5D03G03081720.1">
    <property type="protein sequence ID" value="TraesJAG5D03G03081720.1"/>
    <property type="gene ID" value="TraesJAG5D03G03081720"/>
</dbReference>
<dbReference type="Gramene" id="TraesKAR5D01G0136900.1">
    <property type="protein sequence ID" value="cds.TraesKAR5D01G0136900.1"/>
    <property type="gene ID" value="TraesKAR5D01G0136900"/>
</dbReference>
<dbReference type="Gramene" id="TraesKAR5D01G0136900.2">
    <property type="protein sequence ID" value="cds.TraesKAR5D01G0136900.2"/>
    <property type="gene ID" value="TraesKAR5D01G0136900"/>
</dbReference>
<dbReference type="Gramene" id="TraesLAC5D03G03039480.1">
    <property type="protein sequence ID" value="TraesLAC5D03G03039480.1"/>
    <property type="gene ID" value="TraesLAC5D03G03039480"/>
</dbReference>
<dbReference type="Gramene" id="TraesLDM5D03G03088290.1">
    <property type="protein sequence ID" value="TraesLDM5D03G03088290.1"/>
    <property type="gene ID" value="TraesLDM5D03G03088290"/>
</dbReference>
<dbReference type="Gramene" id="TraesMAC5D03G03082700.1">
    <property type="protein sequence ID" value="TraesMAC5D03G03082700.1"/>
    <property type="gene ID" value="TraesMAC5D03G03082700"/>
</dbReference>
<dbReference type="Gramene" id="TraesNOR5D03G03113330.1">
    <property type="protein sequence ID" value="TraesNOR5D03G03113330.1"/>
    <property type="gene ID" value="TraesNOR5D03G03113330"/>
</dbReference>
<dbReference type="Gramene" id="TraesNORUn03G04699840.1">
    <property type="protein sequence ID" value="TraesNORUn03G04699840.1"/>
    <property type="gene ID" value="TraesNORUn03G04699840"/>
</dbReference>
<dbReference type="Gramene" id="TraesPARA_EIv1.0_1793830.1">
    <property type="protein sequence ID" value="TraesPARA_EIv1.0_1793830.1.CDS"/>
    <property type="gene ID" value="TraesPARA_EIv1.0_1793830"/>
</dbReference>
<dbReference type="Gramene" id="TraesROB_scaffold_041293_01G000100.1">
    <property type="protein sequence ID" value="TraesROB_scaffold_041293_01G000100.1"/>
    <property type="gene ID" value="TraesROB_scaffold_041293_01G000100"/>
</dbReference>
<dbReference type="Gramene" id="TraesSTA5D03G03074560.1">
    <property type="protein sequence ID" value="TraesSTA5D03G03074560.1"/>
    <property type="gene ID" value="TraesSTA5D03G03074560"/>
</dbReference>
<dbReference type="Gramene" id="TraesSYM5D03G03023320.1">
    <property type="protein sequence ID" value="TraesSYM5D03G03023320.1"/>
    <property type="gene ID" value="TraesSYM5D03G03023320"/>
</dbReference>
<dbReference type="Gramene" id="TraesWEE_scaffold_058727_01G000100.1">
    <property type="protein sequence ID" value="TraesWEE_scaffold_058727_01G000100.1"/>
    <property type="gene ID" value="TraesWEE_scaffold_058727_01G000100"/>
</dbReference>
<dbReference type="OMA" id="MAIMPMS"/>
<dbReference type="OrthoDB" id="1642657at2759"/>
<dbReference type="Proteomes" id="UP000019116">
    <property type="component" value="Chromosome 5D"/>
</dbReference>
<dbReference type="GO" id="GO:0005634">
    <property type="term" value="C:nucleus"/>
    <property type="evidence" value="ECO:0000318"/>
    <property type="project" value="GO_Central"/>
</dbReference>
<dbReference type="GO" id="GO:0003700">
    <property type="term" value="F:DNA-binding transcription factor activity"/>
    <property type="evidence" value="ECO:0007669"/>
    <property type="project" value="InterPro"/>
</dbReference>
<dbReference type="GO" id="GO:0043565">
    <property type="term" value="F:sequence-specific DNA binding"/>
    <property type="evidence" value="ECO:0000318"/>
    <property type="project" value="GO_Central"/>
</dbReference>
<dbReference type="GO" id="GO:0000976">
    <property type="term" value="F:transcription cis-regulatory region binding"/>
    <property type="evidence" value="ECO:0007669"/>
    <property type="project" value="UniProtKB-ARBA"/>
</dbReference>
<dbReference type="GO" id="GO:0006952">
    <property type="term" value="P:defense response"/>
    <property type="evidence" value="ECO:0007669"/>
    <property type="project" value="UniProtKB-KW"/>
</dbReference>
<dbReference type="GO" id="GO:0006355">
    <property type="term" value="P:regulation of DNA-templated transcription"/>
    <property type="evidence" value="ECO:0000318"/>
    <property type="project" value="GO_Central"/>
</dbReference>
<dbReference type="CDD" id="cd14702">
    <property type="entry name" value="bZIP_plant_GBF1"/>
    <property type="match status" value="1"/>
</dbReference>
<dbReference type="Gene3D" id="1.20.5.170">
    <property type="match status" value="1"/>
</dbReference>
<dbReference type="InterPro" id="IPR004827">
    <property type="entry name" value="bZIP"/>
</dbReference>
<dbReference type="InterPro" id="IPR045314">
    <property type="entry name" value="bZIP_plant_GBF1"/>
</dbReference>
<dbReference type="InterPro" id="IPR046347">
    <property type="entry name" value="bZIP_sf"/>
</dbReference>
<dbReference type="InterPro" id="IPR044827">
    <property type="entry name" value="GBF-like"/>
</dbReference>
<dbReference type="InterPro" id="IPR012900">
    <property type="entry name" value="MFMR"/>
</dbReference>
<dbReference type="PANTHER" id="PTHR45967:SF2">
    <property type="entry name" value="BZIP TRANSCRIPTION FACTOR 68"/>
    <property type="match status" value="1"/>
</dbReference>
<dbReference type="PANTHER" id="PTHR45967">
    <property type="entry name" value="G-BOX-BINDING FACTOR 3-RELATED"/>
    <property type="match status" value="1"/>
</dbReference>
<dbReference type="Pfam" id="PF00170">
    <property type="entry name" value="bZIP_1"/>
    <property type="match status" value="1"/>
</dbReference>
<dbReference type="Pfam" id="PF07777">
    <property type="entry name" value="MFMR"/>
    <property type="match status" value="1"/>
</dbReference>
<dbReference type="Pfam" id="PF16596">
    <property type="entry name" value="MFMR_assoc"/>
    <property type="match status" value="1"/>
</dbReference>
<dbReference type="SMART" id="SM00338">
    <property type="entry name" value="BRLZ"/>
    <property type="match status" value="1"/>
</dbReference>
<dbReference type="SUPFAM" id="SSF57959">
    <property type="entry name" value="Leucine zipper domain"/>
    <property type="match status" value="1"/>
</dbReference>
<dbReference type="PROSITE" id="PS50217">
    <property type="entry name" value="BZIP"/>
    <property type="match status" value="1"/>
</dbReference>
<dbReference type="PROSITE" id="PS00036">
    <property type="entry name" value="BZIP_BASIC"/>
    <property type="match status" value="1"/>
</dbReference>
<reference key="1">
    <citation type="journal article" date="2018" name="Science">
        <title>Shifting the limits in wheat research and breeding using a fully annotated reference genome.</title>
        <authorList>
            <consortium name="International wheat genome sequencing consortium (IWGSC)"/>
        </authorList>
    </citation>
    <scope>NUCLEOTIDE SEQUENCE [LARGE SCALE GENOMIC DNA]</scope>
    <source>
        <strain>cv. Chinese Spring</strain>
    </source>
</reference>
<reference key="2">
    <citation type="journal article" date="2009" name="Physiol. Mol. Plant Pathol.">
        <title>Cloning and characterization of a bZIP transcription factor gene in wheat and its expression in response to stripe rust pathogen infection and abiotic stresses.</title>
        <authorList>
            <person name="Zhang Y."/>
            <person name="Zhang G."/>
            <person name="Xia N."/>
            <person name="Wang X.J."/>
            <person name="Huang L.L."/>
            <person name="Kang Z.S."/>
        </authorList>
    </citation>
    <scope>FUNCTION</scope>
    <scope>SUBCELLULAR LOCATION</scope>
    <scope>TISSUE SPECIFICITY</scope>
    <scope>INDUCTION</scope>
    <source>
        <tissue>Leaf</tissue>
    </source>
</reference>
<feature type="chain" id="PRO_0000447482" description="bZIP transcription factor 1-D">
    <location>
        <begin position="1"/>
        <end position="388"/>
    </location>
</feature>
<feature type="domain" description="bZIP" evidence="1">
    <location>
        <begin position="293"/>
        <end position="356"/>
    </location>
</feature>
<feature type="region of interest" description="Disordered" evidence="2">
    <location>
        <begin position="1"/>
        <end position="49"/>
    </location>
</feature>
<feature type="region of interest" description="Disordered" evidence="2">
    <location>
        <begin position="103"/>
        <end position="249"/>
    </location>
</feature>
<feature type="region of interest" description="Disordered" evidence="2">
    <location>
        <begin position="261"/>
        <end position="316"/>
    </location>
</feature>
<feature type="region of interest" description="Basic motif" evidence="1">
    <location>
        <begin position="295"/>
        <end position="314"/>
    </location>
</feature>
<feature type="region of interest" description="Leucine-zipper" evidence="1">
    <location>
        <begin position="321"/>
        <end position="356"/>
    </location>
</feature>
<feature type="region of interest" description="Disordered" evidence="2">
    <location>
        <begin position="348"/>
        <end position="388"/>
    </location>
</feature>
<feature type="compositionally biased region" description="Low complexity" evidence="2">
    <location>
        <begin position="23"/>
        <end position="33"/>
    </location>
</feature>
<feature type="compositionally biased region" description="Low complexity" evidence="2">
    <location>
        <begin position="117"/>
        <end position="129"/>
    </location>
</feature>
<feature type="compositionally biased region" description="Polar residues" evidence="2">
    <location>
        <begin position="169"/>
        <end position="179"/>
    </location>
</feature>
<feature type="compositionally biased region" description="Low complexity" evidence="2">
    <location>
        <begin position="180"/>
        <end position="193"/>
    </location>
</feature>
<feature type="compositionally biased region" description="Polar residues" evidence="2">
    <location>
        <begin position="214"/>
        <end position="231"/>
    </location>
</feature>
<feature type="compositionally biased region" description="Basic and acidic residues" evidence="2">
    <location>
        <begin position="302"/>
        <end position="316"/>
    </location>
</feature>
<feature type="compositionally biased region" description="Basic and acidic residues" evidence="2">
    <location>
        <begin position="359"/>
        <end position="369"/>
    </location>
</feature>
<feature type="compositionally biased region" description="Basic and acidic residues" evidence="2">
    <location>
        <begin position="375"/>
        <end position="388"/>
    </location>
</feature>
<accession>A0A3B6MPP5</accession>
<comment type="function">
    <text evidence="3">Probable transcription factor that may be involved in responses to fungal pathogen infection and abiotic stresses.</text>
</comment>
<comment type="subcellular location">
    <subcellularLocation>
        <location evidence="1 3">Nucleus</location>
    </subcellularLocation>
</comment>
<comment type="tissue specificity">
    <text evidence="3">Highly expressed in roots and at lower levels in stems and leaves.</text>
</comment>
<comment type="induction">
    <text evidence="3">Induced during incompatible interaction with the fungal pathogen Puccinia striiformis (Ref.2). Induced by abscisic acid (ABA), ethylene, cold stress, salt stress and wounding (Ref.2).</text>
</comment>
<comment type="similarity">
    <text evidence="5">Belongs to the bZIP family.</text>
</comment>
<keyword id="KW-0238">DNA-binding</keyword>
<keyword id="KW-0539">Nucleus</keyword>
<keyword id="KW-0611">Plant defense</keyword>
<keyword id="KW-1185">Reference proteome</keyword>
<keyword id="KW-0346">Stress response</keyword>
<keyword id="KW-0804">Transcription</keyword>
<keyword id="KW-0805">Transcription regulation</keyword>